<keyword id="KW-0963">Cytoplasm</keyword>
<keyword id="KW-0378">Hydrolase</keyword>
<keyword id="KW-0694">RNA-binding</keyword>
<keyword id="KW-0820">tRNA-binding</keyword>
<dbReference type="EC" id="3.1.1.29" evidence="1"/>
<dbReference type="EMBL" id="BX571857">
    <property type="protein sequence ID" value="CAG42234.1"/>
    <property type="molecule type" value="Genomic_DNA"/>
</dbReference>
<dbReference type="RefSeq" id="WP_000649791.1">
    <property type="nucleotide sequence ID" value="NC_002953.3"/>
</dbReference>
<dbReference type="SMR" id="Q6GBY6"/>
<dbReference type="KEGG" id="sas:SAS0459"/>
<dbReference type="HOGENOM" id="CLU_062456_4_1_9"/>
<dbReference type="GO" id="GO:0005737">
    <property type="term" value="C:cytoplasm"/>
    <property type="evidence" value="ECO:0007669"/>
    <property type="project" value="UniProtKB-SubCell"/>
</dbReference>
<dbReference type="GO" id="GO:0004045">
    <property type="term" value="F:peptidyl-tRNA hydrolase activity"/>
    <property type="evidence" value="ECO:0007669"/>
    <property type="project" value="UniProtKB-UniRule"/>
</dbReference>
<dbReference type="GO" id="GO:0000049">
    <property type="term" value="F:tRNA binding"/>
    <property type="evidence" value="ECO:0007669"/>
    <property type="project" value="UniProtKB-UniRule"/>
</dbReference>
<dbReference type="GO" id="GO:0006515">
    <property type="term" value="P:protein quality control for misfolded or incompletely synthesized proteins"/>
    <property type="evidence" value="ECO:0007669"/>
    <property type="project" value="UniProtKB-UniRule"/>
</dbReference>
<dbReference type="GO" id="GO:0072344">
    <property type="term" value="P:rescue of stalled ribosome"/>
    <property type="evidence" value="ECO:0007669"/>
    <property type="project" value="UniProtKB-UniRule"/>
</dbReference>
<dbReference type="CDD" id="cd00462">
    <property type="entry name" value="PTH"/>
    <property type="match status" value="1"/>
</dbReference>
<dbReference type="FunFam" id="3.40.50.1470:FF:000001">
    <property type="entry name" value="Peptidyl-tRNA hydrolase"/>
    <property type="match status" value="1"/>
</dbReference>
<dbReference type="Gene3D" id="3.40.50.1470">
    <property type="entry name" value="Peptidyl-tRNA hydrolase"/>
    <property type="match status" value="1"/>
</dbReference>
<dbReference type="HAMAP" id="MF_00083">
    <property type="entry name" value="Pept_tRNA_hydro_bact"/>
    <property type="match status" value="1"/>
</dbReference>
<dbReference type="InterPro" id="IPR001328">
    <property type="entry name" value="Pept_tRNA_hydro"/>
</dbReference>
<dbReference type="InterPro" id="IPR018171">
    <property type="entry name" value="Pept_tRNA_hydro_CS"/>
</dbReference>
<dbReference type="InterPro" id="IPR036416">
    <property type="entry name" value="Pept_tRNA_hydro_sf"/>
</dbReference>
<dbReference type="NCBIfam" id="TIGR00447">
    <property type="entry name" value="pth"/>
    <property type="match status" value="1"/>
</dbReference>
<dbReference type="PANTHER" id="PTHR17224">
    <property type="entry name" value="PEPTIDYL-TRNA HYDROLASE"/>
    <property type="match status" value="1"/>
</dbReference>
<dbReference type="PANTHER" id="PTHR17224:SF1">
    <property type="entry name" value="PEPTIDYL-TRNA HYDROLASE"/>
    <property type="match status" value="1"/>
</dbReference>
<dbReference type="Pfam" id="PF01195">
    <property type="entry name" value="Pept_tRNA_hydro"/>
    <property type="match status" value="1"/>
</dbReference>
<dbReference type="SUPFAM" id="SSF53178">
    <property type="entry name" value="Peptidyl-tRNA hydrolase-like"/>
    <property type="match status" value="1"/>
</dbReference>
<dbReference type="PROSITE" id="PS01195">
    <property type="entry name" value="PEPT_TRNA_HYDROL_1"/>
    <property type="match status" value="1"/>
</dbReference>
<dbReference type="PROSITE" id="PS01196">
    <property type="entry name" value="PEPT_TRNA_HYDROL_2"/>
    <property type="match status" value="1"/>
</dbReference>
<protein>
    <recommendedName>
        <fullName evidence="1">Peptidyl-tRNA hydrolase</fullName>
        <shortName evidence="1">Pth</shortName>
        <ecNumber evidence="1">3.1.1.29</ecNumber>
    </recommendedName>
</protein>
<comment type="function">
    <text evidence="1">Hydrolyzes ribosome-free peptidyl-tRNAs (with 1 or more amino acids incorporated), which drop off the ribosome during protein synthesis, or as a result of ribosome stalling.</text>
</comment>
<comment type="function">
    <text evidence="1">Catalyzes the release of premature peptidyl moieties from peptidyl-tRNA molecules trapped in stalled 50S ribosomal subunits, and thus maintains levels of free tRNAs and 50S ribosomes.</text>
</comment>
<comment type="catalytic activity">
    <reaction evidence="1">
        <text>an N-acyl-L-alpha-aminoacyl-tRNA + H2O = an N-acyl-L-amino acid + a tRNA + H(+)</text>
        <dbReference type="Rhea" id="RHEA:54448"/>
        <dbReference type="Rhea" id="RHEA-COMP:10123"/>
        <dbReference type="Rhea" id="RHEA-COMP:13883"/>
        <dbReference type="ChEBI" id="CHEBI:15377"/>
        <dbReference type="ChEBI" id="CHEBI:15378"/>
        <dbReference type="ChEBI" id="CHEBI:59874"/>
        <dbReference type="ChEBI" id="CHEBI:78442"/>
        <dbReference type="ChEBI" id="CHEBI:138191"/>
        <dbReference type="EC" id="3.1.1.29"/>
    </reaction>
</comment>
<comment type="subunit">
    <text evidence="1">Monomer.</text>
</comment>
<comment type="subcellular location">
    <subcellularLocation>
        <location evidence="1">Cytoplasm</location>
    </subcellularLocation>
</comment>
<comment type="similarity">
    <text evidence="1">Belongs to the PTH family.</text>
</comment>
<accession>Q6GBY6</accession>
<sequence>MKCIVGLGNIGKRFELTRHNIGFEVVDYILEKNNFSLDKQKFKGAYTIERMNGDKVLFIEPMTMMNLSGEAVAPIMDYYNVNPEDLIVLYDDLDLEQGQVRLRQKGSAGGHNGMKSIIKMLGTDQFKRIRIGVGRPTNGMTVPDYVLQRFSNDEMVTMEKVIEHAARAIEKFVETSRFDHVMNEFNGEVK</sequence>
<organism>
    <name type="scientific">Staphylococcus aureus (strain MSSA476)</name>
    <dbReference type="NCBI Taxonomy" id="282459"/>
    <lineage>
        <taxon>Bacteria</taxon>
        <taxon>Bacillati</taxon>
        <taxon>Bacillota</taxon>
        <taxon>Bacilli</taxon>
        <taxon>Bacillales</taxon>
        <taxon>Staphylococcaceae</taxon>
        <taxon>Staphylococcus</taxon>
    </lineage>
</organism>
<evidence type="ECO:0000255" key="1">
    <source>
        <dbReference type="HAMAP-Rule" id="MF_00083"/>
    </source>
</evidence>
<gene>
    <name evidence="1" type="primary">pth</name>
    <name type="ordered locus">SAS0459</name>
</gene>
<proteinExistence type="inferred from homology"/>
<name>PTH_STAAS</name>
<reference key="1">
    <citation type="journal article" date="2004" name="Proc. Natl. Acad. Sci. U.S.A.">
        <title>Complete genomes of two clinical Staphylococcus aureus strains: evidence for the rapid evolution of virulence and drug resistance.</title>
        <authorList>
            <person name="Holden M.T.G."/>
            <person name="Feil E.J."/>
            <person name="Lindsay J.A."/>
            <person name="Peacock S.J."/>
            <person name="Day N.P.J."/>
            <person name="Enright M.C."/>
            <person name="Foster T.J."/>
            <person name="Moore C.E."/>
            <person name="Hurst L."/>
            <person name="Atkin R."/>
            <person name="Barron A."/>
            <person name="Bason N."/>
            <person name="Bentley S.D."/>
            <person name="Chillingworth C."/>
            <person name="Chillingworth T."/>
            <person name="Churcher C."/>
            <person name="Clark L."/>
            <person name="Corton C."/>
            <person name="Cronin A."/>
            <person name="Doggett J."/>
            <person name="Dowd L."/>
            <person name="Feltwell T."/>
            <person name="Hance Z."/>
            <person name="Harris B."/>
            <person name="Hauser H."/>
            <person name="Holroyd S."/>
            <person name="Jagels K."/>
            <person name="James K.D."/>
            <person name="Lennard N."/>
            <person name="Line A."/>
            <person name="Mayes R."/>
            <person name="Moule S."/>
            <person name="Mungall K."/>
            <person name="Ormond D."/>
            <person name="Quail M.A."/>
            <person name="Rabbinowitsch E."/>
            <person name="Rutherford K.M."/>
            <person name="Sanders M."/>
            <person name="Sharp S."/>
            <person name="Simmonds M."/>
            <person name="Stevens K."/>
            <person name="Whitehead S."/>
            <person name="Barrell B.G."/>
            <person name="Spratt B.G."/>
            <person name="Parkhill J."/>
        </authorList>
    </citation>
    <scope>NUCLEOTIDE SEQUENCE [LARGE SCALE GENOMIC DNA]</scope>
    <source>
        <strain>MSSA476</strain>
    </source>
</reference>
<feature type="chain" id="PRO_0000187818" description="Peptidyl-tRNA hydrolase">
    <location>
        <begin position="1"/>
        <end position="190"/>
    </location>
</feature>
<feature type="active site" description="Proton acceptor" evidence="1">
    <location>
        <position position="19"/>
    </location>
</feature>
<feature type="binding site" evidence="1">
    <location>
        <position position="14"/>
    </location>
    <ligand>
        <name>tRNA</name>
        <dbReference type="ChEBI" id="CHEBI:17843"/>
    </ligand>
</feature>
<feature type="binding site" evidence="1">
    <location>
        <position position="64"/>
    </location>
    <ligand>
        <name>tRNA</name>
        <dbReference type="ChEBI" id="CHEBI:17843"/>
    </ligand>
</feature>
<feature type="binding site" evidence="1">
    <location>
        <position position="66"/>
    </location>
    <ligand>
        <name>tRNA</name>
        <dbReference type="ChEBI" id="CHEBI:17843"/>
    </ligand>
</feature>
<feature type="binding site" evidence="1">
    <location>
        <position position="112"/>
    </location>
    <ligand>
        <name>tRNA</name>
        <dbReference type="ChEBI" id="CHEBI:17843"/>
    </ligand>
</feature>
<feature type="site" description="Discriminates between blocked and unblocked aminoacyl-tRNA" evidence="1">
    <location>
        <position position="9"/>
    </location>
</feature>
<feature type="site" description="Stabilizes the basic form of H active site to accept a proton" evidence="1">
    <location>
        <position position="91"/>
    </location>
</feature>